<keyword id="KW-0175">Coiled coil</keyword>
<keyword id="KW-0539">Nucleus</keyword>
<keyword id="KW-1185">Reference proteome</keyword>
<keyword id="KW-0804">Transcription</keyword>
<keyword id="KW-0805">Transcription regulation</keyword>
<name>MED9_ARATH</name>
<protein>
    <recommendedName>
        <fullName>Mediator of RNA polymerase II transcription subunit 9</fullName>
    </recommendedName>
</protein>
<dbReference type="EMBL" id="AC073944">
    <property type="protein sequence ID" value="AAG50844.1"/>
    <property type="status" value="ALT_SEQ"/>
    <property type="molecule type" value="Genomic_DNA"/>
</dbReference>
<dbReference type="EMBL" id="CP002684">
    <property type="protein sequence ID" value="AEE33183.1"/>
    <property type="molecule type" value="Genomic_DNA"/>
</dbReference>
<dbReference type="EMBL" id="AY093241">
    <property type="protein sequence ID" value="AAM13240.1"/>
    <property type="molecule type" value="mRNA"/>
</dbReference>
<dbReference type="EMBL" id="BT006281">
    <property type="protein sequence ID" value="AAP13389.1"/>
    <property type="molecule type" value="mRNA"/>
</dbReference>
<dbReference type="EMBL" id="AK227122">
    <property type="protein sequence ID" value="BAE99172.1"/>
    <property type="molecule type" value="mRNA"/>
</dbReference>
<dbReference type="PIR" id="D96592">
    <property type="entry name" value="D96592"/>
</dbReference>
<dbReference type="RefSeq" id="NP_175905.2">
    <property type="nucleotide sequence ID" value="NM_104382.5"/>
</dbReference>
<dbReference type="SMR" id="Q8RWA2"/>
<dbReference type="FunCoup" id="Q8RWA2">
    <property type="interactions" value="83"/>
</dbReference>
<dbReference type="IntAct" id="Q8RWA2">
    <property type="interactions" value="4"/>
</dbReference>
<dbReference type="STRING" id="3702.Q8RWA2"/>
<dbReference type="iPTMnet" id="Q8RWA2"/>
<dbReference type="PaxDb" id="3702-AT1G55080.1"/>
<dbReference type="ProteomicsDB" id="228828"/>
<dbReference type="EnsemblPlants" id="AT1G55080.1">
    <property type="protein sequence ID" value="AT1G55080.1"/>
    <property type="gene ID" value="AT1G55080"/>
</dbReference>
<dbReference type="GeneID" id="841951"/>
<dbReference type="Gramene" id="AT1G55080.1">
    <property type="protein sequence ID" value="AT1G55080.1"/>
    <property type="gene ID" value="AT1G55080"/>
</dbReference>
<dbReference type="KEGG" id="ath:AT1G55080"/>
<dbReference type="Araport" id="AT1G55080"/>
<dbReference type="TAIR" id="AT1G55080">
    <property type="gene designation" value="MED9"/>
</dbReference>
<dbReference type="eggNOG" id="ENOG502RYJY">
    <property type="taxonomic scope" value="Eukaryota"/>
</dbReference>
<dbReference type="HOGENOM" id="CLU_120190_0_0_1"/>
<dbReference type="InParanoid" id="Q8RWA2"/>
<dbReference type="OMA" id="EIVTMEH"/>
<dbReference type="PRO" id="PR:Q8RWA2"/>
<dbReference type="Proteomes" id="UP000006548">
    <property type="component" value="Chromosome 1"/>
</dbReference>
<dbReference type="ExpressionAtlas" id="Q8RWA2">
    <property type="expression patterns" value="baseline and differential"/>
</dbReference>
<dbReference type="GO" id="GO:0016592">
    <property type="term" value="C:mediator complex"/>
    <property type="evidence" value="ECO:0000314"/>
    <property type="project" value="UniProtKB"/>
</dbReference>
<dbReference type="InterPro" id="IPR038790">
    <property type="entry name" value="Med9_plant"/>
</dbReference>
<dbReference type="PANTHER" id="PTHR37188">
    <property type="entry name" value="MEDIATOR OF RNA POLYMERASE II TRANSCRIPTION SUBUNIT-RELATED"/>
    <property type="match status" value="1"/>
</dbReference>
<dbReference type="PANTHER" id="PTHR37188:SF1">
    <property type="entry name" value="MEDIATOR OF RNA POLYMERASE II TRANSCRIPTION SUBUNIT-RELATED"/>
    <property type="match status" value="1"/>
</dbReference>
<sequence length="244" mass="28585">MDQFSGGGGNWSMIPNVQAQGNFGTPTNHDQQLFLQQQQLQQQQQQQQQQQFHLQQQQQTQQQQQQFQPQQQQEMQQYQQFQQQQHFIQQQQFQQQQRLLQSPPLQPQSLQSPPPQQTMVHTPQSMMHTPQQQQQLVQTPVQTPQQHQSLASHFHLYPMVEKLADVIENGTRDQNSDALVNELNSHFDKCQQLLNSISGSLGSKTMTVDGQKRNVEESEQLLQQRRDLIVEYRKSIEEIVTMEH</sequence>
<evidence type="ECO:0000255" key="1"/>
<evidence type="ECO:0000256" key="2">
    <source>
        <dbReference type="SAM" id="MobiDB-lite"/>
    </source>
</evidence>
<evidence type="ECO:0000269" key="3">
    <source>
    </source>
</evidence>
<evidence type="ECO:0000269" key="4">
    <source>
    </source>
</evidence>
<evidence type="ECO:0000305" key="5"/>
<feature type="chain" id="PRO_0000419197" description="Mediator of RNA polymerase II transcription subunit 9">
    <location>
        <begin position="1"/>
        <end position="244"/>
    </location>
</feature>
<feature type="region of interest" description="Disordered" evidence="2">
    <location>
        <begin position="1"/>
        <end position="28"/>
    </location>
</feature>
<feature type="region of interest" description="Disordered" evidence="2">
    <location>
        <begin position="96"/>
        <end position="131"/>
    </location>
</feature>
<feature type="coiled-coil region" evidence="1">
    <location>
        <begin position="212"/>
        <end position="239"/>
    </location>
</feature>
<feature type="compositionally biased region" description="Gly residues" evidence="2">
    <location>
        <begin position="1"/>
        <end position="10"/>
    </location>
</feature>
<feature type="compositionally biased region" description="Polar residues" evidence="2">
    <location>
        <begin position="13"/>
        <end position="28"/>
    </location>
</feature>
<feature type="compositionally biased region" description="Low complexity" evidence="2">
    <location>
        <begin position="96"/>
        <end position="111"/>
    </location>
</feature>
<feature type="compositionally biased region" description="Low complexity" evidence="2">
    <location>
        <begin position="122"/>
        <end position="131"/>
    </location>
</feature>
<proteinExistence type="evidence at protein level"/>
<reference key="1">
    <citation type="journal article" date="2000" name="Nature">
        <title>Sequence and analysis of chromosome 1 of the plant Arabidopsis thaliana.</title>
        <authorList>
            <person name="Theologis A."/>
            <person name="Ecker J.R."/>
            <person name="Palm C.J."/>
            <person name="Federspiel N.A."/>
            <person name="Kaul S."/>
            <person name="White O."/>
            <person name="Alonso J."/>
            <person name="Altafi H."/>
            <person name="Araujo R."/>
            <person name="Bowman C.L."/>
            <person name="Brooks S.Y."/>
            <person name="Buehler E."/>
            <person name="Chan A."/>
            <person name="Chao Q."/>
            <person name="Chen H."/>
            <person name="Cheuk R.F."/>
            <person name="Chin C.W."/>
            <person name="Chung M.K."/>
            <person name="Conn L."/>
            <person name="Conway A.B."/>
            <person name="Conway A.R."/>
            <person name="Creasy T.H."/>
            <person name="Dewar K."/>
            <person name="Dunn P."/>
            <person name="Etgu P."/>
            <person name="Feldblyum T.V."/>
            <person name="Feng J.-D."/>
            <person name="Fong B."/>
            <person name="Fujii C.Y."/>
            <person name="Gill J.E."/>
            <person name="Goldsmith A.D."/>
            <person name="Haas B."/>
            <person name="Hansen N.F."/>
            <person name="Hughes B."/>
            <person name="Huizar L."/>
            <person name="Hunter J.L."/>
            <person name="Jenkins J."/>
            <person name="Johnson-Hopson C."/>
            <person name="Khan S."/>
            <person name="Khaykin E."/>
            <person name="Kim C.J."/>
            <person name="Koo H.L."/>
            <person name="Kremenetskaia I."/>
            <person name="Kurtz D.B."/>
            <person name="Kwan A."/>
            <person name="Lam B."/>
            <person name="Langin-Hooper S."/>
            <person name="Lee A."/>
            <person name="Lee J.M."/>
            <person name="Lenz C.A."/>
            <person name="Li J.H."/>
            <person name="Li Y.-P."/>
            <person name="Lin X."/>
            <person name="Liu S.X."/>
            <person name="Liu Z.A."/>
            <person name="Luros J.S."/>
            <person name="Maiti R."/>
            <person name="Marziali A."/>
            <person name="Militscher J."/>
            <person name="Miranda M."/>
            <person name="Nguyen M."/>
            <person name="Nierman W.C."/>
            <person name="Osborne B.I."/>
            <person name="Pai G."/>
            <person name="Peterson J."/>
            <person name="Pham P.K."/>
            <person name="Rizzo M."/>
            <person name="Rooney T."/>
            <person name="Rowley D."/>
            <person name="Sakano H."/>
            <person name="Salzberg S.L."/>
            <person name="Schwartz J.R."/>
            <person name="Shinn P."/>
            <person name="Southwick A.M."/>
            <person name="Sun H."/>
            <person name="Tallon L.J."/>
            <person name="Tambunga G."/>
            <person name="Toriumi M.J."/>
            <person name="Town C.D."/>
            <person name="Utterback T."/>
            <person name="Van Aken S."/>
            <person name="Vaysberg M."/>
            <person name="Vysotskaia V.S."/>
            <person name="Walker M."/>
            <person name="Wu D."/>
            <person name="Yu G."/>
            <person name="Fraser C.M."/>
            <person name="Venter J.C."/>
            <person name="Davis R.W."/>
        </authorList>
    </citation>
    <scope>NUCLEOTIDE SEQUENCE [LARGE SCALE GENOMIC DNA]</scope>
    <source>
        <strain>cv. Columbia</strain>
    </source>
</reference>
<reference key="2">
    <citation type="journal article" date="2017" name="Plant J.">
        <title>Araport11: a complete reannotation of the Arabidopsis thaliana reference genome.</title>
        <authorList>
            <person name="Cheng C.Y."/>
            <person name="Krishnakumar V."/>
            <person name="Chan A.P."/>
            <person name="Thibaud-Nissen F."/>
            <person name="Schobel S."/>
            <person name="Town C.D."/>
        </authorList>
    </citation>
    <scope>GENOME REANNOTATION</scope>
    <source>
        <strain>cv. Columbia</strain>
    </source>
</reference>
<reference key="3">
    <citation type="journal article" date="2003" name="Science">
        <title>Empirical analysis of transcriptional activity in the Arabidopsis genome.</title>
        <authorList>
            <person name="Yamada K."/>
            <person name="Lim J."/>
            <person name="Dale J.M."/>
            <person name="Chen H."/>
            <person name="Shinn P."/>
            <person name="Palm C.J."/>
            <person name="Southwick A.M."/>
            <person name="Wu H.C."/>
            <person name="Kim C.J."/>
            <person name="Nguyen M."/>
            <person name="Pham P.K."/>
            <person name="Cheuk R.F."/>
            <person name="Karlin-Newmann G."/>
            <person name="Liu S.X."/>
            <person name="Lam B."/>
            <person name="Sakano H."/>
            <person name="Wu T."/>
            <person name="Yu G."/>
            <person name="Miranda M."/>
            <person name="Quach H.L."/>
            <person name="Tripp M."/>
            <person name="Chang C.H."/>
            <person name="Lee J.M."/>
            <person name="Toriumi M.J."/>
            <person name="Chan M.M."/>
            <person name="Tang C.C."/>
            <person name="Onodera C.S."/>
            <person name="Deng J.M."/>
            <person name="Akiyama K."/>
            <person name="Ansari Y."/>
            <person name="Arakawa T."/>
            <person name="Banh J."/>
            <person name="Banno F."/>
            <person name="Bowser L."/>
            <person name="Brooks S.Y."/>
            <person name="Carninci P."/>
            <person name="Chao Q."/>
            <person name="Choy N."/>
            <person name="Enju A."/>
            <person name="Goldsmith A.D."/>
            <person name="Gurjal M."/>
            <person name="Hansen N.F."/>
            <person name="Hayashizaki Y."/>
            <person name="Johnson-Hopson C."/>
            <person name="Hsuan V.W."/>
            <person name="Iida K."/>
            <person name="Karnes M."/>
            <person name="Khan S."/>
            <person name="Koesema E."/>
            <person name="Ishida J."/>
            <person name="Jiang P.X."/>
            <person name="Jones T."/>
            <person name="Kawai J."/>
            <person name="Kamiya A."/>
            <person name="Meyers C."/>
            <person name="Nakajima M."/>
            <person name="Narusaka M."/>
            <person name="Seki M."/>
            <person name="Sakurai T."/>
            <person name="Satou M."/>
            <person name="Tamse R."/>
            <person name="Vaysberg M."/>
            <person name="Wallender E.K."/>
            <person name="Wong C."/>
            <person name="Yamamura Y."/>
            <person name="Yuan S."/>
            <person name="Shinozaki K."/>
            <person name="Davis R.W."/>
            <person name="Theologis A."/>
            <person name="Ecker J.R."/>
        </authorList>
    </citation>
    <scope>NUCLEOTIDE SEQUENCE [LARGE SCALE MRNA]</scope>
    <source>
        <strain>cv. Columbia</strain>
    </source>
</reference>
<reference key="4">
    <citation type="submission" date="2006-07" db="EMBL/GenBank/DDBJ databases">
        <title>Large-scale analysis of RIKEN Arabidopsis full-length (RAFL) cDNAs.</title>
        <authorList>
            <person name="Totoki Y."/>
            <person name="Seki M."/>
            <person name="Ishida J."/>
            <person name="Nakajima M."/>
            <person name="Enju A."/>
            <person name="Kamiya A."/>
            <person name="Narusaka M."/>
            <person name="Shin-i T."/>
            <person name="Nakagawa M."/>
            <person name="Sakamoto N."/>
            <person name="Oishi K."/>
            <person name="Kohara Y."/>
            <person name="Kobayashi M."/>
            <person name="Toyoda A."/>
            <person name="Sakaki Y."/>
            <person name="Sakurai T."/>
            <person name="Iida K."/>
            <person name="Akiyama K."/>
            <person name="Satou M."/>
            <person name="Toyoda T."/>
            <person name="Konagaya A."/>
            <person name="Carninci P."/>
            <person name="Kawai J."/>
            <person name="Hayashizaki Y."/>
            <person name="Shinozaki K."/>
        </authorList>
    </citation>
    <scope>NUCLEOTIDE SEQUENCE [LARGE SCALE MRNA]</scope>
    <source>
        <strain>cv. Columbia</strain>
    </source>
</reference>
<reference key="5">
    <citation type="journal article" date="2007" name="Mol. Cell">
        <title>Purification of a plant mediator from Arabidopsis thaliana identifies PFT1 as the Med25 subunit.</title>
        <authorList>
            <person name="Baeckstroem S."/>
            <person name="Elfving N."/>
            <person name="Nilsson R."/>
            <person name="Wingsle G."/>
            <person name="Bjoerklund S."/>
        </authorList>
    </citation>
    <scope>IDENTIFICATION BY MASS SPECTROMETRY</scope>
    <scope>IDENTIFICATION IN THE MEDIATOR COMPLEX</scope>
    <scope>NOMENCLATURE</scope>
</reference>
<reference key="6">
    <citation type="journal article" date="2011" name="Plant Physiol.">
        <title>The Mediator complex in plants: structure, phylogeny, and expression profiling of representative genes in a dicot (Arabidopsis) and a monocot (rice) during reproduction and abiotic stress.</title>
        <authorList>
            <person name="Mathur S."/>
            <person name="Vyas S."/>
            <person name="Kapoor S."/>
            <person name="Tyagi A.K."/>
        </authorList>
    </citation>
    <scope>IDENTIFICATION</scope>
    <scope>NOMENCLATURE</scope>
</reference>
<reference key="7">
    <citation type="journal article" date="2015" name="Plant Cell">
        <title>Arabidopsis CBP1 is a novel regulator of transcription initiation in central cell-mediated pollen tube guidance.</title>
        <authorList>
            <person name="Li H.J."/>
            <person name="Zhu S.S."/>
            <person name="Zhang M.X."/>
            <person name="Wang T."/>
            <person name="Liang L."/>
            <person name="Xue Y."/>
            <person name="Shi D.Q."/>
            <person name="Liu J."/>
            <person name="Yang W.C."/>
        </authorList>
    </citation>
    <scope>INTERACTION WITH ME14/CBP1</scope>
</reference>
<comment type="function">
    <text>Component of the Mediator complex, a coactivator involved in the regulated transcription of nearly all RNA polymerase II-dependent genes. Mediator functions as a bridge to convey information from gene-specific regulatory proteins to the basal RNA polymerase II transcription machinery. The Mediator complex, having a compact conformation in its free form, is recruited to promoters by direct interactions with regulatory proteins and serves for the assembly of a functional pre-initiation complex with RNA polymerase II and the general transcription factors.</text>
</comment>
<comment type="subunit">
    <text evidence="3 4">Component of the Mediator complex (PubMed:17560376). Interacts with MEE14/CBP1 (PubMed:26462908).</text>
</comment>
<comment type="interaction">
    <interactant intactId="EBI-1386224">
        <id>Q8RWA2</id>
    </interactant>
    <interactant intactId="EBI-1386214">
        <id>Q9LZ00</id>
        <label>MED4</label>
    </interactant>
    <organismsDiffer>false</organismsDiffer>
    <experiments>5</experiments>
</comment>
<comment type="subcellular location">
    <subcellularLocation>
        <location evidence="5">Nucleus</location>
    </subcellularLocation>
</comment>
<comment type="similarity">
    <text evidence="5">Belongs to the plant Mediator complex subunit 9 family.</text>
</comment>
<comment type="sequence caution" evidence="5">
    <conflict type="erroneous gene model prediction">
        <sequence resource="EMBL-CDS" id="AAG50844"/>
    </conflict>
</comment>
<accession>Q8RWA2</accession>
<accession>Q9C724</accession>
<gene>
    <name type="primary">MED9</name>
    <name type="synonym">MED9_1</name>
    <name type="ordered locus">At1g55080</name>
    <name type="ORF">T7N22.3</name>
</gene>
<organism>
    <name type="scientific">Arabidopsis thaliana</name>
    <name type="common">Mouse-ear cress</name>
    <dbReference type="NCBI Taxonomy" id="3702"/>
    <lineage>
        <taxon>Eukaryota</taxon>
        <taxon>Viridiplantae</taxon>
        <taxon>Streptophyta</taxon>
        <taxon>Embryophyta</taxon>
        <taxon>Tracheophyta</taxon>
        <taxon>Spermatophyta</taxon>
        <taxon>Magnoliopsida</taxon>
        <taxon>eudicotyledons</taxon>
        <taxon>Gunneridae</taxon>
        <taxon>Pentapetalae</taxon>
        <taxon>rosids</taxon>
        <taxon>malvids</taxon>
        <taxon>Brassicales</taxon>
        <taxon>Brassicaceae</taxon>
        <taxon>Camelineae</taxon>
        <taxon>Arabidopsis</taxon>
    </lineage>
</organism>